<feature type="chain" id="PRO_0000265626" description="Transcription antitermination protein NusB">
    <location>
        <begin position="1"/>
        <end position="162"/>
    </location>
</feature>
<dbReference type="EMBL" id="AM039952">
    <property type="protein sequence ID" value="CAJ22434.1"/>
    <property type="molecule type" value="Genomic_DNA"/>
</dbReference>
<dbReference type="RefSeq" id="WP_005910971.1">
    <property type="nucleotide sequence ID" value="NZ_CP017190.1"/>
</dbReference>
<dbReference type="SMR" id="Q3BXH9"/>
<dbReference type="STRING" id="456327.BJD11_18795"/>
<dbReference type="GeneID" id="61777662"/>
<dbReference type="KEGG" id="xcv:XCV0803"/>
<dbReference type="eggNOG" id="COG0781">
    <property type="taxonomic scope" value="Bacteria"/>
</dbReference>
<dbReference type="HOGENOM" id="CLU_087843_4_1_6"/>
<dbReference type="Proteomes" id="UP000007069">
    <property type="component" value="Chromosome"/>
</dbReference>
<dbReference type="GO" id="GO:0005829">
    <property type="term" value="C:cytosol"/>
    <property type="evidence" value="ECO:0007669"/>
    <property type="project" value="TreeGrafter"/>
</dbReference>
<dbReference type="GO" id="GO:0003723">
    <property type="term" value="F:RNA binding"/>
    <property type="evidence" value="ECO:0007669"/>
    <property type="project" value="UniProtKB-UniRule"/>
</dbReference>
<dbReference type="GO" id="GO:0006353">
    <property type="term" value="P:DNA-templated transcription termination"/>
    <property type="evidence" value="ECO:0007669"/>
    <property type="project" value="UniProtKB-UniRule"/>
</dbReference>
<dbReference type="GO" id="GO:0031564">
    <property type="term" value="P:transcription antitermination"/>
    <property type="evidence" value="ECO:0007669"/>
    <property type="project" value="UniProtKB-KW"/>
</dbReference>
<dbReference type="FunFam" id="1.10.940.10:FF:000001">
    <property type="entry name" value="Transcription antitermination factor NusB"/>
    <property type="match status" value="1"/>
</dbReference>
<dbReference type="Gene3D" id="1.10.940.10">
    <property type="entry name" value="NusB-like"/>
    <property type="match status" value="1"/>
</dbReference>
<dbReference type="HAMAP" id="MF_00073">
    <property type="entry name" value="NusB"/>
    <property type="match status" value="1"/>
</dbReference>
<dbReference type="InterPro" id="IPR035926">
    <property type="entry name" value="NusB-like_sf"/>
</dbReference>
<dbReference type="InterPro" id="IPR011605">
    <property type="entry name" value="NusB_fam"/>
</dbReference>
<dbReference type="InterPro" id="IPR006027">
    <property type="entry name" value="NusB_RsmB_TIM44"/>
</dbReference>
<dbReference type="NCBIfam" id="TIGR01951">
    <property type="entry name" value="nusB"/>
    <property type="match status" value="1"/>
</dbReference>
<dbReference type="PANTHER" id="PTHR11078:SF3">
    <property type="entry name" value="ANTITERMINATION NUSB DOMAIN-CONTAINING PROTEIN"/>
    <property type="match status" value="1"/>
</dbReference>
<dbReference type="PANTHER" id="PTHR11078">
    <property type="entry name" value="N UTILIZATION SUBSTANCE PROTEIN B-RELATED"/>
    <property type="match status" value="1"/>
</dbReference>
<dbReference type="Pfam" id="PF01029">
    <property type="entry name" value="NusB"/>
    <property type="match status" value="1"/>
</dbReference>
<dbReference type="SUPFAM" id="SSF48013">
    <property type="entry name" value="NusB-like"/>
    <property type="match status" value="1"/>
</dbReference>
<comment type="function">
    <text evidence="1">Involved in transcription antitermination. Required for transcription of ribosomal RNA (rRNA) genes. Binds specifically to the boxA antiterminator sequence of the ribosomal RNA (rrn) operons.</text>
</comment>
<comment type="similarity">
    <text evidence="1">Belongs to the NusB family.</text>
</comment>
<accession>Q3BXH9</accession>
<keyword id="KW-0694">RNA-binding</keyword>
<keyword id="KW-0804">Transcription</keyword>
<keyword id="KW-0889">Transcription antitermination</keyword>
<keyword id="KW-0805">Transcription regulation</keyword>
<sequence length="162" mass="17973">MSKPGGHSRHGRRDGIDPVLRSRARRRALQAVYAWQISGGFAKQVIAQFAHEQAHEVADLAYFENLVEGVLSNRAELDTALTPYLDRSVEEVDAIERAVLRLAAYELLYRQDVPYRVVINEAIETAKRFGSEHGHTYVNGVLDRAAVEWRKVESGASGASGA</sequence>
<gene>
    <name evidence="1" type="primary">nusB</name>
    <name type="ordered locus">XCV0803</name>
</gene>
<name>NUSB_XANE5</name>
<evidence type="ECO:0000255" key="1">
    <source>
        <dbReference type="HAMAP-Rule" id="MF_00073"/>
    </source>
</evidence>
<proteinExistence type="inferred from homology"/>
<organism>
    <name type="scientific">Xanthomonas euvesicatoria pv. vesicatoria (strain 85-10)</name>
    <name type="common">Xanthomonas campestris pv. vesicatoria</name>
    <dbReference type="NCBI Taxonomy" id="316273"/>
    <lineage>
        <taxon>Bacteria</taxon>
        <taxon>Pseudomonadati</taxon>
        <taxon>Pseudomonadota</taxon>
        <taxon>Gammaproteobacteria</taxon>
        <taxon>Lysobacterales</taxon>
        <taxon>Lysobacteraceae</taxon>
        <taxon>Xanthomonas</taxon>
    </lineage>
</organism>
<protein>
    <recommendedName>
        <fullName evidence="1">Transcription antitermination protein NusB</fullName>
    </recommendedName>
    <alternativeName>
        <fullName evidence="1">Antitermination factor NusB</fullName>
    </alternativeName>
</protein>
<reference key="1">
    <citation type="journal article" date="2005" name="J. Bacteriol.">
        <title>Insights into genome plasticity and pathogenicity of the plant pathogenic Bacterium Xanthomonas campestris pv. vesicatoria revealed by the complete genome sequence.</title>
        <authorList>
            <person name="Thieme F."/>
            <person name="Koebnik R."/>
            <person name="Bekel T."/>
            <person name="Berger C."/>
            <person name="Boch J."/>
            <person name="Buettner D."/>
            <person name="Caldana C."/>
            <person name="Gaigalat L."/>
            <person name="Goesmann A."/>
            <person name="Kay S."/>
            <person name="Kirchner O."/>
            <person name="Lanz C."/>
            <person name="Linke B."/>
            <person name="McHardy A.C."/>
            <person name="Meyer F."/>
            <person name="Mittenhuber G."/>
            <person name="Nies D.H."/>
            <person name="Niesbach-Kloesgen U."/>
            <person name="Patschkowski T."/>
            <person name="Rueckert C."/>
            <person name="Rupp O."/>
            <person name="Schneiker S."/>
            <person name="Schuster S.C."/>
            <person name="Vorhoelter F.J."/>
            <person name="Weber E."/>
            <person name="Puehler A."/>
            <person name="Bonas U."/>
            <person name="Bartels D."/>
            <person name="Kaiser O."/>
        </authorList>
    </citation>
    <scope>NUCLEOTIDE SEQUENCE [LARGE SCALE GENOMIC DNA]</scope>
    <source>
        <strain>85-10</strain>
    </source>
</reference>